<gene>
    <name type="primary">Fbln7</name>
    <name type="synonym">Tm14</name>
</gene>
<comment type="function">
    <text evidence="5">An adhesion molecule that interacts with extracellular matrix molecules in developing teeth and may play important roles in differentiation and maintenance of odontoblasts as well as in dentin formation.</text>
</comment>
<comment type="subunit">
    <text evidence="5">Interacts with heparin, FBLN1, FN1 and DSPP. Preferentially binds dental mesenchyme cells and odontoblasts but not dental epithelial cells or nondental cells. Binding requires a heparan sulfate-containing receptor on the cell surface as well as an integrin.</text>
</comment>
<comment type="subcellular location">
    <subcellularLocation>
        <location>Secreted</location>
        <location>Extracellular space</location>
        <location>Extracellular matrix</location>
    </subcellularLocation>
</comment>
<comment type="tissue specificity">
    <text evidence="5">Highly expressed in newborn incisors and molars. A weaker expression is seen in the brain, kidneys, muscles and bones.</text>
</comment>
<comment type="developmental stage">
    <text evidence="5">Expressed by preodontoblasts and odontoblasts in developing teeth. Localizes to the apical pericellular regions of preodontoblasts. When the dentin matrix is fully formed and dentin mineralization occurs, it is present in the predentin matrix and along the dentinal tubules. It is also expressed in the developing growth plate cartilage, hair follicles and extraembryonic areas of the placenta.</text>
</comment>
<comment type="PTM">
    <text evidence="5">N-glycosylated.</text>
</comment>
<comment type="similarity">
    <text evidence="6">Belongs to the fibulin family.</text>
</comment>
<comment type="sequence caution" evidence="6">
    <conflict type="frameshift">
        <sequence resource="EMBL-CDS" id="ABU48629"/>
    </conflict>
</comment>
<comment type="sequence caution" evidence="6">
    <conflict type="frameshift">
        <sequence resource="EMBL-CDS" id="BAB24056"/>
    </conflict>
</comment>
<evidence type="ECO:0000250" key="1"/>
<evidence type="ECO:0000255" key="2"/>
<evidence type="ECO:0000255" key="3">
    <source>
        <dbReference type="PROSITE-ProRule" id="PRU00076"/>
    </source>
</evidence>
<evidence type="ECO:0000255" key="4">
    <source>
        <dbReference type="PROSITE-ProRule" id="PRU00302"/>
    </source>
</evidence>
<evidence type="ECO:0000269" key="5">
    <source>
    </source>
</evidence>
<evidence type="ECO:0000305" key="6"/>
<proteinExistence type="evidence at protein level"/>
<sequence length="440" mass="47927">MGPGSQRALFLLLLLLASPGARAFQSCLNKQQLLTTIRQLQQLLKGQETRFTEGIRNMKSRLAALQNTVNKMTPDAPPVSCPALEAPPDGKKFGSKYLVDHEVYFTCNPGFQLVGPSSVVCLANGSWTGEQPRCRDISECSSQPCHNGGTCVEGINHYRCICPPGKTGNRCQHQTQAAAPDGGEAGDPAFSRAPRCAQVEREQHCSCEAGFHLSSTTGGHSVCQDVNECEIYGQKGRPRLCMHACVNTPGSYRCTCPSGYRILADGKSCEDVDECAGPQHMCPRGTTCINTGGGFQCVNPECPEGSGNISYVKTSPFQCERNPCPMDSRPCRHLPKTISFHYLSLPSKLKTPITLFRMATASIPGHPGPNSLRFGIVGGNSRGHFVMQRSDRQTGELILTQTLEGPQTLEVDVDMSEYLERSFQANHVSKVTIFVSRYDF</sequence>
<keyword id="KW-0106">Calcium</keyword>
<keyword id="KW-0130">Cell adhesion</keyword>
<keyword id="KW-0175">Coiled coil</keyword>
<keyword id="KW-1015">Disulfide bond</keyword>
<keyword id="KW-0245">EGF-like domain</keyword>
<keyword id="KW-0272">Extracellular matrix</keyword>
<keyword id="KW-0325">Glycoprotein</keyword>
<keyword id="KW-0358">Heparin-binding</keyword>
<keyword id="KW-1185">Reference proteome</keyword>
<keyword id="KW-0677">Repeat</keyword>
<keyword id="KW-0964">Secreted</keyword>
<keyword id="KW-0732">Signal</keyword>
<keyword id="KW-0768">Sushi</keyword>
<protein>
    <recommendedName>
        <fullName>Fibulin-7</fullName>
        <shortName>FIBL-7</shortName>
    </recommendedName>
    <alternativeName>
        <fullName>Protein TM14</fullName>
    </alternativeName>
</protein>
<reference key="1">
    <citation type="journal article" date="2007" name="J. Biol. Chem.">
        <title>TM14 is a new member of the fibulin family (fibulin-7) that interacts with extracellular matrix molecules and is active for cell binding.</title>
        <authorList>
            <person name="de Vega S."/>
            <person name="Iwamoto T."/>
            <person name="Nakamura T."/>
            <person name="Hozumi K."/>
            <person name="McKnight D.A."/>
            <person name="Fisher L.W."/>
            <person name="Fukumoto S."/>
            <person name="Yamada Y."/>
        </authorList>
    </citation>
    <scope>NUCLEOTIDE SEQUENCE [MRNA]</scope>
    <scope>FUNCTION</scope>
    <scope>TISSUE SPECIFICITY</scope>
    <scope>DEVELOPMENTAL STAGE</scope>
    <scope>GLYCOSYLATION</scope>
    <scope>INTERACTION WITH HEPARIN; FBLN1; FN1 AND DSPP</scope>
    <source>
        <tissue>Incisor</tissue>
    </source>
</reference>
<reference key="2">
    <citation type="journal article" date="2005" name="Science">
        <title>The transcriptional landscape of the mammalian genome.</title>
        <authorList>
            <person name="Carninci P."/>
            <person name="Kasukawa T."/>
            <person name="Katayama S."/>
            <person name="Gough J."/>
            <person name="Frith M.C."/>
            <person name="Maeda N."/>
            <person name="Oyama R."/>
            <person name="Ravasi T."/>
            <person name="Lenhard B."/>
            <person name="Wells C."/>
            <person name="Kodzius R."/>
            <person name="Shimokawa K."/>
            <person name="Bajic V.B."/>
            <person name="Brenner S.E."/>
            <person name="Batalov S."/>
            <person name="Forrest A.R."/>
            <person name="Zavolan M."/>
            <person name="Davis M.J."/>
            <person name="Wilming L.G."/>
            <person name="Aidinis V."/>
            <person name="Allen J.E."/>
            <person name="Ambesi-Impiombato A."/>
            <person name="Apweiler R."/>
            <person name="Aturaliya R.N."/>
            <person name="Bailey T.L."/>
            <person name="Bansal M."/>
            <person name="Baxter L."/>
            <person name="Beisel K.W."/>
            <person name="Bersano T."/>
            <person name="Bono H."/>
            <person name="Chalk A.M."/>
            <person name="Chiu K.P."/>
            <person name="Choudhary V."/>
            <person name="Christoffels A."/>
            <person name="Clutterbuck D.R."/>
            <person name="Crowe M.L."/>
            <person name="Dalla E."/>
            <person name="Dalrymple B.P."/>
            <person name="de Bono B."/>
            <person name="Della Gatta G."/>
            <person name="di Bernardo D."/>
            <person name="Down T."/>
            <person name="Engstrom P."/>
            <person name="Fagiolini M."/>
            <person name="Faulkner G."/>
            <person name="Fletcher C.F."/>
            <person name="Fukushima T."/>
            <person name="Furuno M."/>
            <person name="Futaki S."/>
            <person name="Gariboldi M."/>
            <person name="Georgii-Hemming P."/>
            <person name="Gingeras T.R."/>
            <person name="Gojobori T."/>
            <person name="Green R.E."/>
            <person name="Gustincich S."/>
            <person name="Harbers M."/>
            <person name="Hayashi Y."/>
            <person name="Hensch T.K."/>
            <person name="Hirokawa N."/>
            <person name="Hill D."/>
            <person name="Huminiecki L."/>
            <person name="Iacono M."/>
            <person name="Ikeo K."/>
            <person name="Iwama A."/>
            <person name="Ishikawa T."/>
            <person name="Jakt M."/>
            <person name="Kanapin A."/>
            <person name="Katoh M."/>
            <person name="Kawasawa Y."/>
            <person name="Kelso J."/>
            <person name="Kitamura H."/>
            <person name="Kitano H."/>
            <person name="Kollias G."/>
            <person name="Krishnan S.P."/>
            <person name="Kruger A."/>
            <person name="Kummerfeld S.K."/>
            <person name="Kurochkin I.V."/>
            <person name="Lareau L.F."/>
            <person name="Lazarevic D."/>
            <person name="Lipovich L."/>
            <person name="Liu J."/>
            <person name="Liuni S."/>
            <person name="McWilliam S."/>
            <person name="Madan Babu M."/>
            <person name="Madera M."/>
            <person name="Marchionni L."/>
            <person name="Matsuda H."/>
            <person name="Matsuzawa S."/>
            <person name="Miki H."/>
            <person name="Mignone F."/>
            <person name="Miyake S."/>
            <person name="Morris K."/>
            <person name="Mottagui-Tabar S."/>
            <person name="Mulder N."/>
            <person name="Nakano N."/>
            <person name="Nakauchi H."/>
            <person name="Ng P."/>
            <person name="Nilsson R."/>
            <person name="Nishiguchi S."/>
            <person name="Nishikawa S."/>
            <person name="Nori F."/>
            <person name="Ohara O."/>
            <person name="Okazaki Y."/>
            <person name="Orlando V."/>
            <person name="Pang K.C."/>
            <person name="Pavan W.J."/>
            <person name="Pavesi G."/>
            <person name="Pesole G."/>
            <person name="Petrovsky N."/>
            <person name="Piazza S."/>
            <person name="Reed J."/>
            <person name="Reid J.F."/>
            <person name="Ring B.Z."/>
            <person name="Ringwald M."/>
            <person name="Rost B."/>
            <person name="Ruan Y."/>
            <person name="Salzberg S.L."/>
            <person name="Sandelin A."/>
            <person name="Schneider C."/>
            <person name="Schoenbach C."/>
            <person name="Sekiguchi K."/>
            <person name="Semple C.A."/>
            <person name="Seno S."/>
            <person name="Sessa L."/>
            <person name="Sheng Y."/>
            <person name="Shibata Y."/>
            <person name="Shimada H."/>
            <person name="Shimada K."/>
            <person name="Silva D."/>
            <person name="Sinclair B."/>
            <person name="Sperling S."/>
            <person name="Stupka E."/>
            <person name="Sugiura K."/>
            <person name="Sultana R."/>
            <person name="Takenaka Y."/>
            <person name="Taki K."/>
            <person name="Tammoja K."/>
            <person name="Tan S.L."/>
            <person name="Tang S."/>
            <person name="Taylor M.S."/>
            <person name="Tegner J."/>
            <person name="Teichmann S.A."/>
            <person name="Ueda H.R."/>
            <person name="van Nimwegen E."/>
            <person name="Verardo R."/>
            <person name="Wei C.L."/>
            <person name="Yagi K."/>
            <person name="Yamanishi H."/>
            <person name="Zabarovsky E."/>
            <person name="Zhu S."/>
            <person name="Zimmer A."/>
            <person name="Hide W."/>
            <person name="Bult C."/>
            <person name="Grimmond S.M."/>
            <person name="Teasdale R.D."/>
            <person name="Liu E.T."/>
            <person name="Brusic V."/>
            <person name="Quackenbush J."/>
            <person name="Wahlestedt C."/>
            <person name="Mattick J.S."/>
            <person name="Hume D.A."/>
            <person name="Kai C."/>
            <person name="Sasaki D."/>
            <person name="Tomaru Y."/>
            <person name="Fukuda S."/>
            <person name="Kanamori-Katayama M."/>
            <person name="Suzuki M."/>
            <person name="Aoki J."/>
            <person name="Arakawa T."/>
            <person name="Iida J."/>
            <person name="Imamura K."/>
            <person name="Itoh M."/>
            <person name="Kato T."/>
            <person name="Kawaji H."/>
            <person name="Kawagashira N."/>
            <person name="Kawashima T."/>
            <person name="Kojima M."/>
            <person name="Kondo S."/>
            <person name="Konno H."/>
            <person name="Nakano K."/>
            <person name="Ninomiya N."/>
            <person name="Nishio T."/>
            <person name="Okada M."/>
            <person name="Plessy C."/>
            <person name="Shibata K."/>
            <person name="Shiraki T."/>
            <person name="Suzuki S."/>
            <person name="Tagami M."/>
            <person name="Waki K."/>
            <person name="Watahiki A."/>
            <person name="Okamura-Oho Y."/>
            <person name="Suzuki H."/>
            <person name="Kawai J."/>
            <person name="Hayashizaki Y."/>
        </authorList>
    </citation>
    <scope>NUCLEOTIDE SEQUENCE [LARGE SCALE MRNA]</scope>
    <source>
        <strain>C57BL/6J</strain>
        <tissue>Placenta</tissue>
    </source>
</reference>
<reference key="3">
    <citation type="journal article" date="2009" name="PLoS Biol.">
        <title>Lineage-specific biology revealed by a finished genome assembly of the mouse.</title>
        <authorList>
            <person name="Church D.M."/>
            <person name="Goodstadt L."/>
            <person name="Hillier L.W."/>
            <person name="Zody M.C."/>
            <person name="Goldstein S."/>
            <person name="She X."/>
            <person name="Bult C.J."/>
            <person name="Agarwala R."/>
            <person name="Cherry J.L."/>
            <person name="DiCuccio M."/>
            <person name="Hlavina W."/>
            <person name="Kapustin Y."/>
            <person name="Meric P."/>
            <person name="Maglott D."/>
            <person name="Birtle Z."/>
            <person name="Marques A.C."/>
            <person name="Graves T."/>
            <person name="Zhou S."/>
            <person name="Teague B."/>
            <person name="Potamousis K."/>
            <person name="Churas C."/>
            <person name="Place M."/>
            <person name="Herschleb J."/>
            <person name="Runnheim R."/>
            <person name="Forrest D."/>
            <person name="Amos-Landgraf J."/>
            <person name="Schwartz D.C."/>
            <person name="Cheng Z."/>
            <person name="Lindblad-Toh K."/>
            <person name="Eichler E.E."/>
            <person name="Ponting C.P."/>
        </authorList>
    </citation>
    <scope>NUCLEOTIDE SEQUENCE [LARGE SCALE GENOMIC DNA]</scope>
    <source>
        <strain>C57BL/6J</strain>
    </source>
</reference>
<reference key="4">
    <citation type="journal article" date="2004" name="Genome Res.">
        <title>The status, quality, and expansion of the NIH full-length cDNA project: the Mammalian Gene Collection (MGC).</title>
        <authorList>
            <consortium name="The MGC Project Team"/>
        </authorList>
    </citation>
    <scope>NUCLEOTIDE SEQUENCE [LARGE SCALE MRNA]</scope>
    <source>
        <strain>FVB/N</strain>
        <tissue>Salivary gland</tissue>
    </source>
</reference>
<organism>
    <name type="scientific">Mus musculus</name>
    <name type="common">Mouse</name>
    <dbReference type="NCBI Taxonomy" id="10090"/>
    <lineage>
        <taxon>Eukaryota</taxon>
        <taxon>Metazoa</taxon>
        <taxon>Chordata</taxon>
        <taxon>Craniata</taxon>
        <taxon>Vertebrata</taxon>
        <taxon>Euteleostomi</taxon>
        <taxon>Mammalia</taxon>
        <taxon>Eutheria</taxon>
        <taxon>Euarchontoglires</taxon>
        <taxon>Glires</taxon>
        <taxon>Rodentia</taxon>
        <taxon>Myomorpha</taxon>
        <taxon>Muroidea</taxon>
        <taxon>Muridae</taxon>
        <taxon>Murinae</taxon>
        <taxon>Mus</taxon>
        <taxon>Mus</taxon>
    </lineage>
</organism>
<feature type="signal peptide" evidence="2">
    <location>
        <begin position="1"/>
        <end position="24"/>
    </location>
</feature>
<feature type="chain" id="PRO_0000313656" description="Fibulin-7">
    <location>
        <begin position="25"/>
        <end position="440"/>
    </location>
</feature>
<feature type="domain" description="Sushi" evidence="4">
    <location>
        <begin position="79"/>
        <end position="136"/>
    </location>
</feature>
<feature type="domain" description="EGF-like 1; calcium-binding" evidence="3">
    <location>
        <begin position="136"/>
        <end position="172"/>
    </location>
</feature>
<feature type="domain" description="EGF-like 2; calcium-binding" evidence="3">
    <location>
        <begin position="225"/>
        <end position="270"/>
    </location>
</feature>
<feature type="domain" description="EGF-like 3; calcium-binding" evidence="3">
    <location>
        <begin position="271"/>
        <end position="320"/>
    </location>
</feature>
<feature type="coiled-coil region" evidence="2">
    <location>
        <begin position="28"/>
        <end position="73"/>
    </location>
</feature>
<feature type="glycosylation site" description="N-linked (GlcNAc...) asparagine" evidence="2">
    <location>
        <position position="124"/>
    </location>
</feature>
<feature type="glycosylation site" description="N-linked (GlcNAc...) asparagine" evidence="2">
    <location>
        <position position="308"/>
    </location>
</feature>
<feature type="disulfide bond" evidence="1">
    <location>
        <begin position="81"/>
        <end position="121"/>
    </location>
</feature>
<feature type="disulfide bond" evidence="1">
    <location>
        <begin position="107"/>
        <end position="134"/>
    </location>
</feature>
<feature type="disulfide bond" evidence="1">
    <location>
        <begin position="140"/>
        <end position="151"/>
    </location>
</feature>
<feature type="disulfide bond" evidence="1">
    <location>
        <begin position="145"/>
        <end position="160"/>
    </location>
</feature>
<feature type="disulfide bond" evidence="1">
    <location>
        <begin position="162"/>
        <end position="171"/>
    </location>
</feature>
<feature type="disulfide bond" evidence="1">
    <location>
        <begin position="229"/>
        <end position="245"/>
    </location>
</feature>
<feature type="disulfide bond" evidence="1">
    <location>
        <begin position="241"/>
        <end position="254"/>
    </location>
</feature>
<feature type="disulfide bond" evidence="1">
    <location>
        <begin position="256"/>
        <end position="269"/>
    </location>
</feature>
<feature type="disulfide bond" evidence="1">
    <location>
        <begin position="275"/>
        <end position="288"/>
    </location>
</feature>
<feature type="disulfide bond" evidence="1">
    <location>
        <begin position="282"/>
        <end position="297"/>
    </location>
</feature>
<feature type="disulfide bond" evidence="1">
    <location>
        <begin position="302"/>
        <end position="319"/>
    </location>
</feature>
<feature type="sequence conflict" description="In Ref. 1; ABU48629 and 2; BAB24056." evidence="6" ref="1 2">
    <original>G</original>
    <variation>A</variation>
    <location>
        <position position="54"/>
    </location>
</feature>
<feature type="sequence conflict" description="In Ref. 1; ABU48629 and 2; BAB24056." evidence="6" ref="1 2">
    <original>R</original>
    <variation>G</variation>
    <location>
        <position position="170"/>
    </location>
</feature>
<dbReference type="EMBL" id="EF668007">
    <property type="protein sequence ID" value="ABU48629.1"/>
    <property type="status" value="ALT_FRAME"/>
    <property type="molecule type" value="mRNA"/>
</dbReference>
<dbReference type="EMBL" id="AK005465">
    <property type="protein sequence ID" value="BAB24056.1"/>
    <property type="status" value="ALT_FRAME"/>
    <property type="molecule type" value="mRNA"/>
</dbReference>
<dbReference type="EMBL" id="AL808104">
    <property type="status" value="NOT_ANNOTATED_CDS"/>
    <property type="molecule type" value="Genomic_DNA"/>
</dbReference>
<dbReference type="EMBL" id="BC095941">
    <property type="protein sequence ID" value="AAH95941.1"/>
    <property type="molecule type" value="mRNA"/>
</dbReference>
<dbReference type="CCDS" id="CCDS38235.1"/>
<dbReference type="RefSeq" id="NP_077199.2">
    <property type="nucleotide sequence ID" value="NM_024237.4"/>
</dbReference>
<dbReference type="BioGRID" id="214006">
    <property type="interactions" value="2"/>
</dbReference>
<dbReference type="FunCoup" id="Q501P1">
    <property type="interactions" value="221"/>
</dbReference>
<dbReference type="STRING" id="10090.ENSMUSP00000105953"/>
<dbReference type="GlyCosmos" id="Q501P1">
    <property type="glycosylation" value="2 sites, No reported glycans"/>
</dbReference>
<dbReference type="GlyGen" id="Q501P1">
    <property type="glycosylation" value="2 sites"/>
</dbReference>
<dbReference type="PhosphoSitePlus" id="Q501P1"/>
<dbReference type="jPOST" id="Q501P1"/>
<dbReference type="PaxDb" id="10090-ENSMUSP00000105953"/>
<dbReference type="PeptideAtlas" id="Q501P1"/>
<dbReference type="ProteomicsDB" id="271876"/>
<dbReference type="Antibodypedia" id="33261">
    <property type="antibodies" value="132 antibodies from 20 providers"/>
</dbReference>
<dbReference type="DNASU" id="70370"/>
<dbReference type="Ensembl" id="ENSMUST00000028864.3">
    <property type="protein sequence ID" value="ENSMUSP00000028864.3"/>
    <property type="gene ID" value="ENSMUSG00000027386.10"/>
</dbReference>
<dbReference type="Ensembl" id="ENSMUST00000110324.8">
    <property type="protein sequence ID" value="ENSMUSP00000105953.2"/>
    <property type="gene ID" value="ENSMUSG00000027386.10"/>
</dbReference>
<dbReference type="GeneID" id="70370"/>
<dbReference type="KEGG" id="mmu:70370"/>
<dbReference type="UCSC" id="uc008mgy.1">
    <property type="organism name" value="mouse"/>
</dbReference>
<dbReference type="AGR" id="MGI:1917620"/>
<dbReference type="CTD" id="129804"/>
<dbReference type="MGI" id="MGI:1917620">
    <property type="gene designation" value="Fbln7"/>
</dbReference>
<dbReference type="VEuPathDB" id="HostDB:ENSMUSG00000027386"/>
<dbReference type="eggNOG" id="KOG1217">
    <property type="taxonomic scope" value="Eukaryota"/>
</dbReference>
<dbReference type="GeneTree" id="ENSGT00830000128368"/>
<dbReference type="HOGENOM" id="CLU_043541_0_0_1"/>
<dbReference type="InParanoid" id="Q501P1"/>
<dbReference type="OMA" id="CEPGFHM"/>
<dbReference type="OrthoDB" id="4062651at2759"/>
<dbReference type="PhylomeDB" id="Q501P1"/>
<dbReference type="TreeFam" id="TF330076"/>
<dbReference type="BioGRID-ORCS" id="70370">
    <property type="hits" value="1 hit in 77 CRISPR screens"/>
</dbReference>
<dbReference type="ChiTaRS" id="Fbln7">
    <property type="organism name" value="mouse"/>
</dbReference>
<dbReference type="PRO" id="PR:Q501P1"/>
<dbReference type="Proteomes" id="UP000000589">
    <property type="component" value="Chromosome 2"/>
</dbReference>
<dbReference type="RNAct" id="Q501P1">
    <property type="molecule type" value="protein"/>
</dbReference>
<dbReference type="Bgee" id="ENSMUSG00000027386">
    <property type="expression patterns" value="Expressed in placenta labyrinth and 134 other cell types or tissues"/>
</dbReference>
<dbReference type="GO" id="GO:0031012">
    <property type="term" value="C:extracellular matrix"/>
    <property type="evidence" value="ECO:0000314"/>
    <property type="project" value="MGI"/>
</dbReference>
<dbReference type="GO" id="GO:0005615">
    <property type="term" value="C:extracellular space"/>
    <property type="evidence" value="ECO:0000314"/>
    <property type="project" value="MGI"/>
</dbReference>
<dbReference type="GO" id="GO:0005509">
    <property type="term" value="F:calcium ion binding"/>
    <property type="evidence" value="ECO:0007669"/>
    <property type="project" value="InterPro"/>
</dbReference>
<dbReference type="GO" id="GO:0043395">
    <property type="term" value="F:heparan sulfate proteoglycan binding"/>
    <property type="evidence" value="ECO:0000314"/>
    <property type="project" value="MGI"/>
</dbReference>
<dbReference type="GO" id="GO:0008201">
    <property type="term" value="F:heparin binding"/>
    <property type="evidence" value="ECO:0000314"/>
    <property type="project" value="MGI"/>
</dbReference>
<dbReference type="GO" id="GO:0007155">
    <property type="term" value="P:cell adhesion"/>
    <property type="evidence" value="ECO:0007669"/>
    <property type="project" value="UniProtKB-KW"/>
</dbReference>
<dbReference type="CDD" id="cd00033">
    <property type="entry name" value="CCP"/>
    <property type="match status" value="1"/>
</dbReference>
<dbReference type="CDD" id="cd00054">
    <property type="entry name" value="EGF_CA"/>
    <property type="match status" value="3"/>
</dbReference>
<dbReference type="FunFam" id="2.10.25.10:FF:000568">
    <property type="entry name" value="Fibulin 7"/>
    <property type="match status" value="1"/>
</dbReference>
<dbReference type="FunFam" id="2.10.25.10:FF:000819">
    <property type="entry name" value="Fibulin 7"/>
    <property type="match status" value="1"/>
</dbReference>
<dbReference type="FunFam" id="2.10.70.10:FF:000064">
    <property type="entry name" value="Fibulin 7"/>
    <property type="match status" value="1"/>
</dbReference>
<dbReference type="FunFam" id="2.10.25.10:FF:000008">
    <property type="entry name" value="Signal peptide, CUB domain, EGF-like 2"/>
    <property type="match status" value="1"/>
</dbReference>
<dbReference type="Gene3D" id="2.10.70.10">
    <property type="entry name" value="Complement Module, domain 1"/>
    <property type="match status" value="1"/>
</dbReference>
<dbReference type="Gene3D" id="2.10.25.10">
    <property type="entry name" value="Laminin"/>
    <property type="match status" value="3"/>
</dbReference>
<dbReference type="InterPro" id="IPR050751">
    <property type="entry name" value="ECM_structural_protein"/>
</dbReference>
<dbReference type="InterPro" id="IPR001881">
    <property type="entry name" value="EGF-like_Ca-bd_dom"/>
</dbReference>
<dbReference type="InterPro" id="IPR000742">
    <property type="entry name" value="EGF-like_dom"/>
</dbReference>
<dbReference type="InterPro" id="IPR000152">
    <property type="entry name" value="EGF-type_Asp/Asn_hydroxyl_site"/>
</dbReference>
<dbReference type="InterPro" id="IPR018097">
    <property type="entry name" value="EGF_Ca-bd_CS"/>
</dbReference>
<dbReference type="InterPro" id="IPR055088">
    <property type="entry name" value="Fibulin_C"/>
</dbReference>
<dbReference type="InterPro" id="IPR049883">
    <property type="entry name" value="NOTCH1_EGF-like"/>
</dbReference>
<dbReference type="InterPro" id="IPR035976">
    <property type="entry name" value="Sushi/SCR/CCP_sf"/>
</dbReference>
<dbReference type="InterPro" id="IPR000436">
    <property type="entry name" value="Sushi_SCR_CCP_dom"/>
</dbReference>
<dbReference type="PANTHER" id="PTHR24034">
    <property type="entry name" value="EGF-LIKE DOMAIN-CONTAINING PROTEIN"/>
    <property type="match status" value="1"/>
</dbReference>
<dbReference type="PANTHER" id="PTHR24034:SF94">
    <property type="entry name" value="FIBULIN-7"/>
    <property type="match status" value="1"/>
</dbReference>
<dbReference type="Pfam" id="PF00008">
    <property type="entry name" value="EGF"/>
    <property type="match status" value="1"/>
</dbReference>
<dbReference type="Pfam" id="PF07645">
    <property type="entry name" value="EGF_CA"/>
    <property type="match status" value="1"/>
</dbReference>
<dbReference type="Pfam" id="PF22914">
    <property type="entry name" value="Fibulin_C"/>
    <property type="match status" value="1"/>
</dbReference>
<dbReference type="Pfam" id="PF14670">
    <property type="entry name" value="FXa_inhibition"/>
    <property type="match status" value="1"/>
</dbReference>
<dbReference type="Pfam" id="PF00084">
    <property type="entry name" value="Sushi"/>
    <property type="match status" value="1"/>
</dbReference>
<dbReference type="PRINTS" id="PR00010">
    <property type="entry name" value="EGFBLOOD"/>
</dbReference>
<dbReference type="SMART" id="SM00032">
    <property type="entry name" value="CCP"/>
    <property type="match status" value="1"/>
</dbReference>
<dbReference type="SMART" id="SM00181">
    <property type="entry name" value="EGF"/>
    <property type="match status" value="3"/>
</dbReference>
<dbReference type="SMART" id="SM00179">
    <property type="entry name" value="EGF_CA"/>
    <property type="match status" value="3"/>
</dbReference>
<dbReference type="SUPFAM" id="SSF57535">
    <property type="entry name" value="Complement control module/SCR domain"/>
    <property type="match status" value="1"/>
</dbReference>
<dbReference type="SUPFAM" id="SSF57196">
    <property type="entry name" value="EGF/Laminin"/>
    <property type="match status" value="2"/>
</dbReference>
<dbReference type="PROSITE" id="PS00010">
    <property type="entry name" value="ASX_HYDROXYL"/>
    <property type="match status" value="1"/>
</dbReference>
<dbReference type="PROSITE" id="PS00022">
    <property type="entry name" value="EGF_1"/>
    <property type="match status" value="1"/>
</dbReference>
<dbReference type="PROSITE" id="PS01186">
    <property type="entry name" value="EGF_2"/>
    <property type="match status" value="1"/>
</dbReference>
<dbReference type="PROSITE" id="PS50026">
    <property type="entry name" value="EGF_3"/>
    <property type="match status" value="2"/>
</dbReference>
<dbReference type="PROSITE" id="PS01187">
    <property type="entry name" value="EGF_CA"/>
    <property type="match status" value="2"/>
</dbReference>
<dbReference type="PROSITE" id="PS50923">
    <property type="entry name" value="SUSHI"/>
    <property type="match status" value="1"/>
</dbReference>
<accession>Q501P1</accession>
<accession>Q9DAW5</accession>
<name>FBLN7_MOUSE</name>